<accession>Q6HLK3</accession>
<dbReference type="EC" id="1.7.1.13" evidence="1"/>
<dbReference type="EMBL" id="AE017355">
    <property type="protein sequence ID" value="AAT61963.1"/>
    <property type="molecule type" value="Genomic_DNA"/>
</dbReference>
<dbReference type="RefSeq" id="WP_000918896.1">
    <property type="nucleotide sequence ID" value="NC_005957.1"/>
</dbReference>
<dbReference type="RefSeq" id="YP_035568.1">
    <property type="nucleotide sequence ID" value="NC_005957.1"/>
</dbReference>
<dbReference type="SMR" id="Q6HLK3"/>
<dbReference type="KEGG" id="btk:BT9727_1233"/>
<dbReference type="PATRIC" id="fig|281309.8.peg.1297"/>
<dbReference type="HOGENOM" id="CLU_102489_0_1_9"/>
<dbReference type="UniPathway" id="UPA00392"/>
<dbReference type="Proteomes" id="UP000001301">
    <property type="component" value="Chromosome"/>
</dbReference>
<dbReference type="GO" id="GO:0005737">
    <property type="term" value="C:cytoplasm"/>
    <property type="evidence" value="ECO:0007669"/>
    <property type="project" value="UniProtKB-SubCell"/>
</dbReference>
<dbReference type="GO" id="GO:0033739">
    <property type="term" value="F:preQ1 synthase activity"/>
    <property type="evidence" value="ECO:0007669"/>
    <property type="project" value="UniProtKB-UniRule"/>
</dbReference>
<dbReference type="GO" id="GO:0008616">
    <property type="term" value="P:queuosine biosynthetic process"/>
    <property type="evidence" value="ECO:0007669"/>
    <property type="project" value="UniProtKB-UniRule"/>
</dbReference>
<dbReference type="GO" id="GO:0006400">
    <property type="term" value="P:tRNA modification"/>
    <property type="evidence" value="ECO:0007669"/>
    <property type="project" value="UniProtKB-UniRule"/>
</dbReference>
<dbReference type="Gene3D" id="3.30.1130.10">
    <property type="match status" value="1"/>
</dbReference>
<dbReference type="HAMAP" id="MF_00818">
    <property type="entry name" value="QueF_type1"/>
    <property type="match status" value="1"/>
</dbReference>
<dbReference type="InterPro" id="IPR043133">
    <property type="entry name" value="GTP-CH-I_C/QueF"/>
</dbReference>
<dbReference type="InterPro" id="IPR050084">
    <property type="entry name" value="NADPH_dep_7-cyano-7-deazaG_red"/>
</dbReference>
<dbReference type="InterPro" id="IPR029500">
    <property type="entry name" value="QueF"/>
</dbReference>
<dbReference type="InterPro" id="IPR016856">
    <property type="entry name" value="QueF_type1"/>
</dbReference>
<dbReference type="NCBIfam" id="TIGR03139">
    <property type="entry name" value="QueF-II"/>
    <property type="match status" value="1"/>
</dbReference>
<dbReference type="PANTHER" id="PTHR34354">
    <property type="entry name" value="NADPH-DEPENDENT 7-CYANO-7-DEAZAGUANINE REDUCTASE"/>
    <property type="match status" value="1"/>
</dbReference>
<dbReference type="PANTHER" id="PTHR34354:SF1">
    <property type="entry name" value="NADPH-DEPENDENT 7-CYANO-7-DEAZAGUANINE REDUCTASE"/>
    <property type="match status" value="1"/>
</dbReference>
<dbReference type="Pfam" id="PF14489">
    <property type="entry name" value="QueF"/>
    <property type="match status" value="1"/>
</dbReference>
<dbReference type="PIRSF" id="PIRSF027377">
    <property type="entry name" value="Nitrile_oxidored_QueF"/>
    <property type="match status" value="1"/>
</dbReference>
<dbReference type="SUPFAM" id="SSF55620">
    <property type="entry name" value="Tetrahydrobiopterin biosynthesis enzymes-like"/>
    <property type="match status" value="1"/>
</dbReference>
<gene>
    <name evidence="1" type="primary">queF</name>
    <name type="ordered locus">BT9727_1233</name>
</gene>
<sequence length="165" mass="19527">MAGRLDEDLKDVTLLGNQNTKYLFEYSPKILEVFDNNHPNRDYFVKFNCPEFTSLCPKTGQPDFATIYISYIPEQRMVESKSLKLYLFSFRNHGDFHEDCMNVIMNDLIKLMDPRYIEVWGKFTPRGGISIDPYCNYGRPGTKYEQMADYRMMNHDLYPETIDNR</sequence>
<proteinExistence type="inferred from homology"/>
<name>QUEF_BACHK</name>
<reference key="1">
    <citation type="journal article" date="2006" name="J. Bacteriol.">
        <title>Pathogenomic sequence analysis of Bacillus cereus and Bacillus thuringiensis isolates closely related to Bacillus anthracis.</title>
        <authorList>
            <person name="Han C.S."/>
            <person name="Xie G."/>
            <person name="Challacombe J.F."/>
            <person name="Altherr M.R."/>
            <person name="Bhotika S.S."/>
            <person name="Bruce D."/>
            <person name="Campbell C.S."/>
            <person name="Campbell M.L."/>
            <person name="Chen J."/>
            <person name="Chertkov O."/>
            <person name="Cleland C."/>
            <person name="Dimitrijevic M."/>
            <person name="Doggett N.A."/>
            <person name="Fawcett J.J."/>
            <person name="Glavina T."/>
            <person name="Goodwin L.A."/>
            <person name="Hill K.K."/>
            <person name="Hitchcock P."/>
            <person name="Jackson P.J."/>
            <person name="Keim P."/>
            <person name="Kewalramani A.R."/>
            <person name="Longmire J."/>
            <person name="Lucas S."/>
            <person name="Malfatti S."/>
            <person name="McMurry K."/>
            <person name="Meincke L.J."/>
            <person name="Misra M."/>
            <person name="Moseman B.L."/>
            <person name="Mundt M."/>
            <person name="Munk A.C."/>
            <person name="Okinaka R.T."/>
            <person name="Parson-Quintana B."/>
            <person name="Reilly L.P."/>
            <person name="Richardson P."/>
            <person name="Robinson D.L."/>
            <person name="Rubin E."/>
            <person name="Saunders E."/>
            <person name="Tapia R."/>
            <person name="Tesmer J.G."/>
            <person name="Thayer N."/>
            <person name="Thompson L.S."/>
            <person name="Tice H."/>
            <person name="Ticknor L.O."/>
            <person name="Wills P.L."/>
            <person name="Brettin T.S."/>
            <person name="Gilna P."/>
        </authorList>
    </citation>
    <scope>NUCLEOTIDE SEQUENCE [LARGE SCALE GENOMIC DNA]</scope>
    <source>
        <strain>97-27</strain>
    </source>
</reference>
<protein>
    <recommendedName>
        <fullName evidence="1">NADPH-dependent 7-cyano-7-deazaguanine reductase</fullName>
        <ecNumber evidence="1">1.7.1.13</ecNumber>
    </recommendedName>
    <alternativeName>
        <fullName evidence="1">7-cyano-7-carbaguanine reductase</fullName>
    </alternativeName>
    <alternativeName>
        <fullName evidence="1">NADPH-dependent nitrile oxidoreductase</fullName>
    </alternativeName>
    <alternativeName>
        <fullName evidence="1">PreQ(0) reductase</fullName>
    </alternativeName>
</protein>
<comment type="function">
    <text evidence="1">Catalyzes the NADPH-dependent reduction of 7-cyano-7-deazaguanine (preQ0) to 7-aminomethyl-7-deazaguanine (preQ1).</text>
</comment>
<comment type="catalytic activity">
    <reaction evidence="1">
        <text>7-aminomethyl-7-carbaguanine + 2 NADP(+) = 7-cyano-7-deazaguanine + 2 NADPH + 3 H(+)</text>
        <dbReference type="Rhea" id="RHEA:13409"/>
        <dbReference type="ChEBI" id="CHEBI:15378"/>
        <dbReference type="ChEBI" id="CHEBI:45075"/>
        <dbReference type="ChEBI" id="CHEBI:57783"/>
        <dbReference type="ChEBI" id="CHEBI:58349"/>
        <dbReference type="ChEBI" id="CHEBI:58703"/>
        <dbReference type="EC" id="1.7.1.13"/>
    </reaction>
</comment>
<comment type="pathway">
    <text evidence="1">tRNA modification; tRNA-queuosine biosynthesis.</text>
</comment>
<comment type="subcellular location">
    <subcellularLocation>
        <location evidence="1">Cytoplasm</location>
    </subcellularLocation>
</comment>
<comment type="similarity">
    <text evidence="1">Belongs to the GTP cyclohydrolase I family. QueF type 1 subfamily.</text>
</comment>
<evidence type="ECO:0000255" key="1">
    <source>
        <dbReference type="HAMAP-Rule" id="MF_00818"/>
    </source>
</evidence>
<feature type="chain" id="PRO_0000162958" description="NADPH-dependent 7-cyano-7-deazaguanine reductase">
    <location>
        <begin position="1"/>
        <end position="165"/>
    </location>
</feature>
<feature type="active site" description="Thioimide intermediate" evidence="1">
    <location>
        <position position="56"/>
    </location>
</feature>
<feature type="active site" description="Proton donor" evidence="1">
    <location>
        <position position="63"/>
    </location>
</feature>
<feature type="binding site" evidence="1">
    <location>
        <begin position="78"/>
        <end position="80"/>
    </location>
    <ligand>
        <name>substrate</name>
    </ligand>
</feature>
<feature type="binding site" evidence="1">
    <location>
        <begin position="97"/>
        <end position="98"/>
    </location>
    <ligand>
        <name>substrate</name>
    </ligand>
</feature>
<keyword id="KW-0963">Cytoplasm</keyword>
<keyword id="KW-0521">NADP</keyword>
<keyword id="KW-0560">Oxidoreductase</keyword>
<keyword id="KW-0671">Queuosine biosynthesis</keyword>
<organism>
    <name type="scientific">Bacillus thuringiensis subsp. konkukian (strain 97-27)</name>
    <dbReference type="NCBI Taxonomy" id="281309"/>
    <lineage>
        <taxon>Bacteria</taxon>
        <taxon>Bacillati</taxon>
        <taxon>Bacillota</taxon>
        <taxon>Bacilli</taxon>
        <taxon>Bacillales</taxon>
        <taxon>Bacillaceae</taxon>
        <taxon>Bacillus</taxon>
        <taxon>Bacillus cereus group</taxon>
    </lineage>
</organism>